<feature type="chain" id="PRO_1000062204" description="DNA mismatch repair protein MutH">
    <location>
        <begin position="1"/>
        <end position="230"/>
    </location>
</feature>
<gene>
    <name evidence="1" type="primary">mutH</name>
    <name type="ordered locus">Ent638_3273</name>
</gene>
<protein>
    <recommendedName>
        <fullName evidence="1">DNA mismatch repair protein MutH</fullName>
    </recommendedName>
    <alternativeName>
        <fullName evidence="1">Methyl-directed mismatch repair protein</fullName>
    </alternativeName>
</protein>
<organism>
    <name type="scientific">Enterobacter sp. (strain 638)</name>
    <dbReference type="NCBI Taxonomy" id="399742"/>
    <lineage>
        <taxon>Bacteria</taxon>
        <taxon>Pseudomonadati</taxon>
        <taxon>Pseudomonadota</taxon>
        <taxon>Gammaproteobacteria</taxon>
        <taxon>Enterobacterales</taxon>
        <taxon>Enterobacteriaceae</taxon>
        <taxon>Enterobacter</taxon>
    </lineage>
</organism>
<proteinExistence type="inferred from homology"/>
<comment type="function">
    <text evidence="1">Sequence-specific endonuclease that cleaves unmethylated GATC sequences. It is involved in DNA mismatch repair.</text>
</comment>
<comment type="subcellular location">
    <subcellularLocation>
        <location evidence="1">Cytoplasm</location>
    </subcellularLocation>
</comment>
<comment type="similarity">
    <text evidence="1">Belongs to the MutH family.</text>
</comment>
<dbReference type="EMBL" id="CP000653">
    <property type="protein sequence ID" value="ABP61937.1"/>
    <property type="molecule type" value="Genomic_DNA"/>
</dbReference>
<dbReference type="RefSeq" id="WP_015960266.1">
    <property type="nucleotide sequence ID" value="NC_009436.1"/>
</dbReference>
<dbReference type="SMR" id="A4WE07"/>
<dbReference type="STRING" id="399742.Ent638_3273"/>
<dbReference type="KEGG" id="ent:Ent638_3273"/>
<dbReference type="eggNOG" id="COG3066">
    <property type="taxonomic scope" value="Bacteria"/>
</dbReference>
<dbReference type="HOGENOM" id="CLU_086669_0_0_6"/>
<dbReference type="OrthoDB" id="5634909at2"/>
<dbReference type="Proteomes" id="UP000000230">
    <property type="component" value="Chromosome"/>
</dbReference>
<dbReference type="GO" id="GO:0005737">
    <property type="term" value="C:cytoplasm"/>
    <property type="evidence" value="ECO:0007669"/>
    <property type="project" value="UniProtKB-SubCell"/>
</dbReference>
<dbReference type="GO" id="GO:0003677">
    <property type="term" value="F:DNA binding"/>
    <property type="evidence" value="ECO:0007669"/>
    <property type="project" value="InterPro"/>
</dbReference>
<dbReference type="GO" id="GO:0004519">
    <property type="term" value="F:endonuclease activity"/>
    <property type="evidence" value="ECO:0007669"/>
    <property type="project" value="UniProtKB-UniRule"/>
</dbReference>
<dbReference type="GO" id="GO:0006304">
    <property type="term" value="P:DNA modification"/>
    <property type="evidence" value="ECO:0007669"/>
    <property type="project" value="InterPro"/>
</dbReference>
<dbReference type="GO" id="GO:0006298">
    <property type="term" value="P:mismatch repair"/>
    <property type="evidence" value="ECO:0007669"/>
    <property type="project" value="UniProtKB-UniRule"/>
</dbReference>
<dbReference type="CDD" id="cd00583">
    <property type="entry name" value="MutH-like"/>
    <property type="match status" value="1"/>
</dbReference>
<dbReference type="FunFam" id="3.40.600.10:FF:000001">
    <property type="entry name" value="DNA mismatch repair protein MutH"/>
    <property type="match status" value="1"/>
</dbReference>
<dbReference type="Gene3D" id="3.40.600.10">
    <property type="entry name" value="DNA mismatch repair MutH/Restriction endonuclease, type II"/>
    <property type="match status" value="1"/>
</dbReference>
<dbReference type="HAMAP" id="MF_00759">
    <property type="entry name" value="MutH"/>
    <property type="match status" value="1"/>
</dbReference>
<dbReference type="InterPro" id="IPR004230">
    <property type="entry name" value="DNA_mismatch_repair_MutH"/>
</dbReference>
<dbReference type="InterPro" id="IPR011337">
    <property type="entry name" value="DNA_rep_MutH/RE_typeII_Sau3AI"/>
</dbReference>
<dbReference type="InterPro" id="IPR037057">
    <property type="entry name" value="DNA_rep_MutH/T2_RE_sf"/>
</dbReference>
<dbReference type="InterPro" id="IPR011335">
    <property type="entry name" value="Restrct_endonuc-II-like"/>
</dbReference>
<dbReference type="NCBIfam" id="TIGR02248">
    <property type="entry name" value="mutH_TIGR"/>
    <property type="match status" value="1"/>
</dbReference>
<dbReference type="NCBIfam" id="NF003458">
    <property type="entry name" value="PRK05070.1"/>
    <property type="match status" value="1"/>
</dbReference>
<dbReference type="Pfam" id="PF02976">
    <property type="entry name" value="MutH"/>
    <property type="match status" value="1"/>
</dbReference>
<dbReference type="SMART" id="SM00927">
    <property type="entry name" value="MutH"/>
    <property type="match status" value="1"/>
</dbReference>
<dbReference type="SUPFAM" id="SSF52980">
    <property type="entry name" value="Restriction endonuclease-like"/>
    <property type="match status" value="1"/>
</dbReference>
<sequence>MFPLVPLRSPPATEEQLLHQAQRVAGHTLGELAALAGLPIPQDLKRDKGWIGVLLELWLGASAGSKPEQDFAAMGVELKTIPVDSQGKPLETTFVCVAPLTGNTGVTWETSHVRHKLKRVLWIPIEGDRAIPLAERRVGAPLLWSPDEKEDRQLCQDWEELMDMIVLGHVERITARHGEVMQLRPKAANSKALTEAIGARGEPILTLPRGFYLKKNFTGALLARHFLLKT</sequence>
<keyword id="KW-0963">Cytoplasm</keyword>
<keyword id="KW-0227">DNA damage</keyword>
<keyword id="KW-0234">DNA repair</keyword>
<keyword id="KW-0255">Endonuclease</keyword>
<keyword id="KW-0378">Hydrolase</keyword>
<keyword id="KW-0540">Nuclease</keyword>
<evidence type="ECO:0000255" key="1">
    <source>
        <dbReference type="HAMAP-Rule" id="MF_00759"/>
    </source>
</evidence>
<accession>A4WE07</accession>
<name>MUTH_ENT38</name>
<reference key="1">
    <citation type="journal article" date="2010" name="PLoS Genet.">
        <title>Genome sequence of the plant growth promoting endophytic bacterium Enterobacter sp. 638.</title>
        <authorList>
            <person name="Taghavi S."/>
            <person name="van der Lelie D."/>
            <person name="Hoffman A."/>
            <person name="Zhang Y.B."/>
            <person name="Walla M.D."/>
            <person name="Vangronsveld J."/>
            <person name="Newman L."/>
            <person name="Monchy S."/>
        </authorList>
    </citation>
    <scope>NUCLEOTIDE SEQUENCE [LARGE SCALE GENOMIC DNA]</scope>
    <source>
        <strain>638</strain>
    </source>
</reference>